<keyword id="KW-0963">Cytoplasm</keyword>
<keyword id="KW-0489">Methyltransferase</keyword>
<keyword id="KW-1185">Reference proteome</keyword>
<keyword id="KW-0694">RNA-binding</keyword>
<keyword id="KW-0698">rRNA processing</keyword>
<keyword id="KW-0949">S-adenosyl-L-methionine</keyword>
<keyword id="KW-0808">Transferase</keyword>
<protein>
    <recommendedName>
        <fullName evidence="1">Ribosomal RNA small subunit methyltransferase A</fullName>
        <ecNumber evidence="1">2.1.1.182</ecNumber>
    </recommendedName>
    <alternativeName>
        <fullName evidence="1">16S rRNA (adenine(1518)-N(6)/adenine(1519)-N(6))-dimethyltransferase</fullName>
    </alternativeName>
    <alternativeName>
        <fullName evidence="1">16S rRNA dimethyladenosine transferase</fullName>
    </alternativeName>
    <alternativeName>
        <fullName evidence="1">16S rRNA dimethylase</fullName>
    </alternativeName>
    <alternativeName>
        <fullName evidence="1">S-adenosylmethionine-6-N', N'-adenosyl(rRNA) dimethyltransferase</fullName>
    </alternativeName>
</protein>
<reference key="1">
    <citation type="journal article" date="2001" name="Genome Res.">
        <title>The complete genome sequence of the lactic acid bacterium Lactococcus lactis ssp. lactis IL1403.</title>
        <authorList>
            <person name="Bolotin A."/>
            <person name="Wincker P."/>
            <person name="Mauger S."/>
            <person name="Jaillon O."/>
            <person name="Malarme K."/>
            <person name="Weissenbach J."/>
            <person name="Ehrlich S.D."/>
            <person name="Sorokin A."/>
        </authorList>
    </citation>
    <scope>NUCLEOTIDE SEQUENCE [LARGE SCALE GENOMIC DNA]</scope>
    <source>
        <strain>IL1403</strain>
    </source>
</reference>
<sequence>MTENNIDRISNIIRTQDILRRHDFNFKKKFGQNFLTDHNILTKITQTAELSKEVNVIEIGPGIGSLTQYLLEEAAEVMAFEIDKSLIPILEETMAPYDNFTLVSADILKVDLLSEIQKFKNPNLPIKVVANLPYYITTPILMHLIESKIPFSEFVVMMQKEVADRIAASPKTKAYGSLSIAVQYYMEASVAFIVPRTVFIPAPNVDSAILKMVRREAPLVEVEDEEWFFKTMHSSFVHRRKTLMNNLQAAFGKESKPEIEKLLAQAEISPTIRGEALSIEEFAKLADALLPLKK</sequence>
<comment type="function">
    <text evidence="1">Specifically dimethylates two adjacent adenosines (A1518 and A1519) in the loop of a conserved hairpin near the 3'-end of 16S rRNA in the 30S particle. May play a critical role in biogenesis of 30S subunits.</text>
</comment>
<comment type="catalytic activity">
    <reaction evidence="1">
        <text>adenosine(1518)/adenosine(1519) in 16S rRNA + 4 S-adenosyl-L-methionine = N(6)-dimethyladenosine(1518)/N(6)-dimethyladenosine(1519) in 16S rRNA + 4 S-adenosyl-L-homocysteine + 4 H(+)</text>
        <dbReference type="Rhea" id="RHEA:19609"/>
        <dbReference type="Rhea" id="RHEA-COMP:10232"/>
        <dbReference type="Rhea" id="RHEA-COMP:10233"/>
        <dbReference type="ChEBI" id="CHEBI:15378"/>
        <dbReference type="ChEBI" id="CHEBI:57856"/>
        <dbReference type="ChEBI" id="CHEBI:59789"/>
        <dbReference type="ChEBI" id="CHEBI:74411"/>
        <dbReference type="ChEBI" id="CHEBI:74493"/>
        <dbReference type="EC" id="2.1.1.182"/>
    </reaction>
</comment>
<comment type="subcellular location">
    <subcellularLocation>
        <location evidence="1">Cytoplasm</location>
    </subcellularLocation>
</comment>
<comment type="similarity">
    <text evidence="1">Belongs to the class I-like SAM-binding methyltransferase superfamily. rRNA adenine N(6)-methyltransferase family. RsmA subfamily.</text>
</comment>
<gene>
    <name evidence="1" type="primary">rsmA</name>
    <name evidence="1" type="synonym">ksgA</name>
    <name type="ordered locus">LL0690</name>
    <name type="ORF">L0363</name>
</gene>
<organism>
    <name type="scientific">Lactococcus lactis subsp. lactis (strain IL1403)</name>
    <name type="common">Streptococcus lactis</name>
    <dbReference type="NCBI Taxonomy" id="272623"/>
    <lineage>
        <taxon>Bacteria</taxon>
        <taxon>Bacillati</taxon>
        <taxon>Bacillota</taxon>
        <taxon>Bacilli</taxon>
        <taxon>Lactobacillales</taxon>
        <taxon>Streptococcaceae</taxon>
        <taxon>Lactococcus</taxon>
    </lineage>
</organism>
<proteinExistence type="inferred from homology"/>
<evidence type="ECO:0000255" key="1">
    <source>
        <dbReference type="HAMAP-Rule" id="MF_00607"/>
    </source>
</evidence>
<name>RSMA_LACLA</name>
<accession>Q9CHN8</accession>
<dbReference type="EC" id="2.1.1.182" evidence="1"/>
<dbReference type="EMBL" id="AE005176">
    <property type="protein sequence ID" value="AAK04788.1"/>
    <property type="molecule type" value="Genomic_DNA"/>
</dbReference>
<dbReference type="PIR" id="B86711">
    <property type="entry name" value="B86711"/>
</dbReference>
<dbReference type="RefSeq" id="NP_266846.1">
    <property type="nucleotide sequence ID" value="NC_002662.1"/>
</dbReference>
<dbReference type="RefSeq" id="WP_003129621.1">
    <property type="nucleotide sequence ID" value="NC_002662.1"/>
</dbReference>
<dbReference type="SMR" id="Q9CHN8"/>
<dbReference type="PaxDb" id="272623-L0363"/>
<dbReference type="EnsemblBacteria" id="AAK04788">
    <property type="protein sequence ID" value="AAK04788"/>
    <property type="gene ID" value="L0363"/>
</dbReference>
<dbReference type="GeneID" id="89632827"/>
<dbReference type="KEGG" id="lla:L0363"/>
<dbReference type="PATRIC" id="fig|272623.7.peg.741"/>
<dbReference type="eggNOG" id="COG0030">
    <property type="taxonomic scope" value="Bacteria"/>
</dbReference>
<dbReference type="HOGENOM" id="CLU_041220_0_0_9"/>
<dbReference type="OrthoDB" id="9814755at2"/>
<dbReference type="Proteomes" id="UP000002196">
    <property type="component" value="Chromosome"/>
</dbReference>
<dbReference type="GO" id="GO:0005829">
    <property type="term" value="C:cytosol"/>
    <property type="evidence" value="ECO:0007669"/>
    <property type="project" value="TreeGrafter"/>
</dbReference>
<dbReference type="GO" id="GO:0052908">
    <property type="term" value="F:16S rRNA (adenine(1518)-N(6)/adenine(1519)-N(6))-dimethyltransferase activity"/>
    <property type="evidence" value="ECO:0007669"/>
    <property type="project" value="UniProtKB-EC"/>
</dbReference>
<dbReference type="GO" id="GO:0003723">
    <property type="term" value="F:RNA binding"/>
    <property type="evidence" value="ECO:0007669"/>
    <property type="project" value="UniProtKB-KW"/>
</dbReference>
<dbReference type="CDD" id="cd02440">
    <property type="entry name" value="AdoMet_MTases"/>
    <property type="match status" value="1"/>
</dbReference>
<dbReference type="FunFam" id="3.40.50.150:FF:000023">
    <property type="entry name" value="Ribosomal RNA small subunit methyltransferase A"/>
    <property type="match status" value="1"/>
</dbReference>
<dbReference type="Gene3D" id="1.10.8.100">
    <property type="entry name" value="Ribosomal RNA adenine dimethylase-like, domain 2"/>
    <property type="match status" value="1"/>
</dbReference>
<dbReference type="Gene3D" id="3.40.50.150">
    <property type="entry name" value="Vaccinia Virus protein VP39"/>
    <property type="match status" value="1"/>
</dbReference>
<dbReference type="HAMAP" id="MF_00607">
    <property type="entry name" value="16SrRNA_methyltr_A"/>
    <property type="match status" value="1"/>
</dbReference>
<dbReference type="InterPro" id="IPR001737">
    <property type="entry name" value="KsgA/Erm"/>
</dbReference>
<dbReference type="InterPro" id="IPR023165">
    <property type="entry name" value="rRNA_Ade_diMease-like_C"/>
</dbReference>
<dbReference type="InterPro" id="IPR020596">
    <property type="entry name" value="rRNA_Ade_Mease_Trfase_CS"/>
</dbReference>
<dbReference type="InterPro" id="IPR020598">
    <property type="entry name" value="rRNA_Ade_methylase_Trfase_N"/>
</dbReference>
<dbReference type="InterPro" id="IPR011530">
    <property type="entry name" value="rRNA_adenine_dimethylase"/>
</dbReference>
<dbReference type="InterPro" id="IPR029063">
    <property type="entry name" value="SAM-dependent_MTases_sf"/>
</dbReference>
<dbReference type="NCBIfam" id="TIGR00755">
    <property type="entry name" value="ksgA"/>
    <property type="match status" value="1"/>
</dbReference>
<dbReference type="PANTHER" id="PTHR11727">
    <property type="entry name" value="DIMETHYLADENOSINE TRANSFERASE"/>
    <property type="match status" value="1"/>
</dbReference>
<dbReference type="PANTHER" id="PTHR11727:SF7">
    <property type="entry name" value="DIMETHYLADENOSINE TRANSFERASE-RELATED"/>
    <property type="match status" value="1"/>
</dbReference>
<dbReference type="Pfam" id="PF00398">
    <property type="entry name" value="RrnaAD"/>
    <property type="match status" value="1"/>
</dbReference>
<dbReference type="SMART" id="SM00650">
    <property type="entry name" value="rADc"/>
    <property type="match status" value="1"/>
</dbReference>
<dbReference type="SUPFAM" id="SSF53335">
    <property type="entry name" value="S-adenosyl-L-methionine-dependent methyltransferases"/>
    <property type="match status" value="1"/>
</dbReference>
<dbReference type="PROSITE" id="PS01131">
    <property type="entry name" value="RRNA_A_DIMETH"/>
    <property type="match status" value="1"/>
</dbReference>
<dbReference type="PROSITE" id="PS51689">
    <property type="entry name" value="SAM_RNA_A_N6_MT"/>
    <property type="match status" value="1"/>
</dbReference>
<feature type="chain" id="PRO_0000101545" description="Ribosomal RNA small subunit methyltransferase A">
    <location>
        <begin position="1"/>
        <end position="294"/>
    </location>
</feature>
<feature type="binding site" evidence="1">
    <location>
        <position position="33"/>
    </location>
    <ligand>
        <name>S-adenosyl-L-methionine</name>
        <dbReference type="ChEBI" id="CHEBI:59789"/>
    </ligand>
</feature>
<feature type="binding site" evidence="1">
    <location>
        <position position="35"/>
    </location>
    <ligand>
        <name>S-adenosyl-L-methionine</name>
        <dbReference type="ChEBI" id="CHEBI:59789"/>
    </ligand>
</feature>
<feature type="binding site" evidence="1">
    <location>
        <position position="60"/>
    </location>
    <ligand>
        <name>S-adenosyl-L-methionine</name>
        <dbReference type="ChEBI" id="CHEBI:59789"/>
    </ligand>
</feature>
<feature type="binding site" evidence="1">
    <location>
        <position position="81"/>
    </location>
    <ligand>
        <name>S-adenosyl-L-methionine</name>
        <dbReference type="ChEBI" id="CHEBI:59789"/>
    </ligand>
</feature>
<feature type="binding site" evidence="1">
    <location>
        <position position="106"/>
    </location>
    <ligand>
        <name>S-adenosyl-L-methionine</name>
        <dbReference type="ChEBI" id="CHEBI:59789"/>
    </ligand>
</feature>
<feature type="binding site" evidence="1">
    <location>
        <position position="131"/>
    </location>
    <ligand>
        <name>S-adenosyl-L-methionine</name>
        <dbReference type="ChEBI" id="CHEBI:59789"/>
    </ligand>
</feature>